<proteinExistence type="inferred from homology"/>
<organism>
    <name type="scientific">Bartonella henselae (strain ATCC 49882 / DSM 28221 / CCUG 30454 / Houston 1)</name>
    <name type="common">Rochalimaea henselae</name>
    <dbReference type="NCBI Taxonomy" id="283166"/>
    <lineage>
        <taxon>Bacteria</taxon>
        <taxon>Pseudomonadati</taxon>
        <taxon>Pseudomonadota</taxon>
        <taxon>Alphaproteobacteria</taxon>
        <taxon>Hyphomicrobiales</taxon>
        <taxon>Bartonellaceae</taxon>
        <taxon>Bartonella</taxon>
    </lineage>
</organism>
<feature type="chain" id="PRO_0000187100" description="2-dehydro-3-deoxyphosphooctonate aldolase">
    <location>
        <begin position="1"/>
        <end position="279"/>
    </location>
</feature>
<evidence type="ECO:0000255" key="1">
    <source>
        <dbReference type="HAMAP-Rule" id="MF_00056"/>
    </source>
</evidence>
<dbReference type="EC" id="2.5.1.55" evidence="1"/>
<dbReference type="EMBL" id="BX897699">
    <property type="protein sequence ID" value="CAF27379.1"/>
    <property type="molecule type" value="Genomic_DNA"/>
</dbReference>
<dbReference type="RefSeq" id="WP_011180500.1">
    <property type="nucleotide sequence ID" value="NZ_LRIJ02000001.1"/>
</dbReference>
<dbReference type="SMR" id="Q6G409"/>
<dbReference type="PaxDb" id="283166-BH05710"/>
<dbReference type="EnsemblBacteria" id="CAF27379">
    <property type="protein sequence ID" value="CAF27379"/>
    <property type="gene ID" value="BH05710"/>
</dbReference>
<dbReference type="GeneID" id="92985230"/>
<dbReference type="KEGG" id="bhe:BH05710"/>
<dbReference type="eggNOG" id="COG2877">
    <property type="taxonomic scope" value="Bacteria"/>
</dbReference>
<dbReference type="OrthoDB" id="9776934at2"/>
<dbReference type="UniPathway" id="UPA00030"/>
<dbReference type="UniPathway" id="UPA00357">
    <property type="reaction ID" value="UER00474"/>
</dbReference>
<dbReference type="Proteomes" id="UP000000421">
    <property type="component" value="Chromosome"/>
</dbReference>
<dbReference type="GO" id="GO:0005737">
    <property type="term" value="C:cytoplasm"/>
    <property type="evidence" value="ECO:0007669"/>
    <property type="project" value="UniProtKB-SubCell"/>
</dbReference>
<dbReference type="GO" id="GO:0008676">
    <property type="term" value="F:3-deoxy-8-phosphooctulonate synthase activity"/>
    <property type="evidence" value="ECO:0007669"/>
    <property type="project" value="UniProtKB-UniRule"/>
</dbReference>
<dbReference type="GO" id="GO:0019294">
    <property type="term" value="P:keto-3-deoxy-D-manno-octulosonic acid biosynthetic process"/>
    <property type="evidence" value="ECO:0007669"/>
    <property type="project" value="UniProtKB-UniRule"/>
</dbReference>
<dbReference type="Gene3D" id="3.20.20.70">
    <property type="entry name" value="Aldolase class I"/>
    <property type="match status" value="1"/>
</dbReference>
<dbReference type="HAMAP" id="MF_00056">
    <property type="entry name" value="KDO8P_synth"/>
    <property type="match status" value="1"/>
</dbReference>
<dbReference type="InterPro" id="IPR013785">
    <property type="entry name" value="Aldolase_TIM"/>
</dbReference>
<dbReference type="InterPro" id="IPR006218">
    <property type="entry name" value="DAHP1/KDSA"/>
</dbReference>
<dbReference type="InterPro" id="IPR006269">
    <property type="entry name" value="KDO8P_synthase"/>
</dbReference>
<dbReference type="NCBIfam" id="TIGR01362">
    <property type="entry name" value="KDO8P_synth"/>
    <property type="match status" value="1"/>
</dbReference>
<dbReference type="NCBIfam" id="NF003543">
    <property type="entry name" value="PRK05198.1"/>
    <property type="match status" value="1"/>
</dbReference>
<dbReference type="PANTHER" id="PTHR21057">
    <property type="entry name" value="PHOSPHO-2-DEHYDRO-3-DEOXYHEPTONATE ALDOLASE"/>
    <property type="match status" value="1"/>
</dbReference>
<dbReference type="Pfam" id="PF00793">
    <property type="entry name" value="DAHP_synth_1"/>
    <property type="match status" value="1"/>
</dbReference>
<dbReference type="SUPFAM" id="SSF51569">
    <property type="entry name" value="Aldolase"/>
    <property type="match status" value="1"/>
</dbReference>
<accession>Q6G409</accession>
<comment type="catalytic activity">
    <reaction evidence="1">
        <text>D-arabinose 5-phosphate + phosphoenolpyruvate + H2O = 3-deoxy-alpha-D-manno-2-octulosonate-8-phosphate + phosphate</text>
        <dbReference type="Rhea" id="RHEA:14053"/>
        <dbReference type="ChEBI" id="CHEBI:15377"/>
        <dbReference type="ChEBI" id="CHEBI:43474"/>
        <dbReference type="ChEBI" id="CHEBI:57693"/>
        <dbReference type="ChEBI" id="CHEBI:58702"/>
        <dbReference type="ChEBI" id="CHEBI:85985"/>
        <dbReference type="EC" id="2.5.1.55"/>
    </reaction>
</comment>
<comment type="pathway">
    <text evidence="1">Carbohydrate biosynthesis; 3-deoxy-D-manno-octulosonate biosynthesis; 3-deoxy-D-manno-octulosonate from D-ribulose 5-phosphate: step 2/3.</text>
</comment>
<comment type="pathway">
    <text evidence="1">Bacterial outer membrane biogenesis; lipopolysaccharide biosynthesis.</text>
</comment>
<comment type="subcellular location">
    <subcellularLocation>
        <location evidence="1">Cytoplasm</location>
    </subcellularLocation>
</comment>
<comment type="similarity">
    <text evidence="1">Belongs to the KdsA family.</text>
</comment>
<sequence length="279" mass="30509">MSEPNAIVKVGNIIFSNEAPFSLIAGPCQIESRDHAFEMAGRIKTITDQVGIGFVYKSSYDKANRTSLSAVRGVGLENAMAIFSDLKKEFGCPILTDVHTEEQCTVVASTVDILQIPAFLCRQTDLLVAAAKTGRVINIKKGQFLAPWDMKNVLRKVTQSGNRNVMLCERGTSFGYNRLISDMRSLPILRSFGAPVIFDATHSVQEPGGQGDSSGGQRQFVEILARAAVSVGVAGIFLETHQDPDNAPSDGPNMIKIDHLQRLLETLMEFDYLSKKTIE</sequence>
<protein>
    <recommendedName>
        <fullName evidence="1">2-dehydro-3-deoxyphosphooctonate aldolase</fullName>
        <ecNumber evidence="1">2.5.1.55</ecNumber>
    </recommendedName>
    <alternativeName>
        <fullName evidence="1">3-deoxy-D-manno-octulosonic acid 8-phosphate synthase</fullName>
    </alternativeName>
    <alternativeName>
        <fullName evidence="1">KDO-8-phosphate synthase</fullName>
        <shortName evidence="1">KDO 8-P synthase</shortName>
        <shortName evidence="1">KDOPS</shortName>
    </alternativeName>
    <alternativeName>
        <fullName evidence="1">Phospho-2-dehydro-3-deoxyoctonate aldolase</fullName>
    </alternativeName>
</protein>
<gene>
    <name evidence="1" type="primary">kdsA</name>
    <name type="ordered locus">BH05710</name>
</gene>
<reference key="1">
    <citation type="journal article" date="2004" name="Proc. Natl. Acad. Sci. U.S.A.">
        <title>The louse-borne human pathogen Bartonella quintana is a genomic derivative of the zoonotic agent Bartonella henselae.</title>
        <authorList>
            <person name="Alsmark U.C.M."/>
            <person name="Frank A.C."/>
            <person name="Karlberg E.O."/>
            <person name="Legault B.-A."/>
            <person name="Ardell D.H."/>
            <person name="Canbaeck B."/>
            <person name="Eriksson A.-S."/>
            <person name="Naeslund A.K."/>
            <person name="Handley S.A."/>
            <person name="Huvet M."/>
            <person name="La Scola B."/>
            <person name="Holmberg M."/>
            <person name="Andersson S.G.E."/>
        </authorList>
    </citation>
    <scope>NUCLEOTIDE SEQUENCE [LARGE SCALE GENOMIC DNA]</scope>
    <source>
        <strain>ATCC 49882 / DSM 28221 / CCUG 30454 / Houston 1</strain>
    </source>
</reference>
<keyword id="KW-0963">Cytoplasm</keyword>
<keyword id="KW-0448">Lipopolysaccharide biosynthesis</keyword>
<keyword id="KW-0808">Transferase</keyword>
<name>KDSA_BARHE</name>